<sequence>MTLQARNLTLARGGAPILTDVSLTLAPGTLVGLLGANGAGKSTLLAALAGELAPRSGQVFLGDADLATLNARQLARRRAVLPQKPSLSFDLGVSDVVGMGAYPFPELDPAAVRQLVRDALEQAGVTHLAQRRYPQLSGGEQQRVQFARVLAQCHAMHAPGQTRYLMLDEPISNLDPRHQMELLATARALAHEAGMGVLVIVHDINQAARWCDTLALLADGRLAALGPPADVLTPDHMRRVYGIEADVLAHPTLPGRLLVLAR</sequence>
<reference key="1">
    <citation type="journal article" date="2003" name="Nat. Genet.">
        <title>Comparative analysis of the genome sequences of Bordetella pertussis, Bordetella parapertussis and Bordetella bronchiseptica.</title>
        <authorList>
            <person name="Parkhill J."/>
            <person name="Sebaihia M."/>
            <person name="Preston A."/>
            <person name="Murphy L.D."/>
            <person name="Thomson N.R."/>
            <person name="Harris D.E."/>
            <person name="Holden M.T.G."/>
            <person name="Churcher C.M."/>
            <person name="Bentley S.D."/>
            <person name="Mungall K.L."/>
            <person name="Cerdeno-Tarraga A.-M."/>
            <person name="Temple L."/>
            <person name="James K.D."/>
            <person name="Harris B."/>
            <person name="Quail M.A."/>
            <person name="Achtman M."/>
            <person name="Atkin R."/>
            <person name="Baker S."/>
            <person name="Basham D."/>
            <person name="Bason N."/>
            <person name="Cherevach I."/>
            <person name="Chillingworth T."/>
            <person name="Collins M."/>
            <person name="Cronin A."/>
            <person name="Davis P."/>
            <person name="Doggett J."/>
            <person name="Feltwell T."/>
            <person name="Goble A."/>
            <person name="Hamlin N."/>
            <person name="Hauser H."/>
            <person name="Holroyd S."/>
            <person name="Jagels K."/>
            <person name="Leather S."/>
            <person name="Moule S."/>
            <person name="Norberczak H."/>
            <person name="O'Neil S."/>
            <person name="Ormond D."/>
            <person name="Price C."/>
            <person name="Rabbinowitsch E."/>
            <person name="Rutter S."/>
            <person name="Sanders M."/>
            <person name="Saunders D."/>
            <person name="Seeger K."/>
            <person name="Sharp S."/>
            <person name="Simmonds M."/>
            <person name="Skelton J."/>
            <person name="Squares R."/>
            <person name="Squares S."/>
            <person name="Stevens K."/>
            <person name="Unwin L."/>
            <person name="Whitehead S."/>
            <person name="Barrell B.G."/>
            <person name="Maskell D.J."/>
        </authorList>
    </citation>
    <scope>NUCLEOTIDE SEQUENCE [LARGE SCALE GENOMIC DNA]</scope>
    <source>
        <strain>ATCC BAA-588 / NCTC 13252 / RB50</strain>
    </source>
</reference>
<feature type="chain" id="PRO_0000269577" description="Hemin import ATP-binding protein HmuV">
    <location>
        <begin position="1"/>
        <end position="262"/>
    </location>
</feature>
<feature type="domain" description="ABC transporter" evidence="1">
    <location>
        <begin position="3"/>
        <end position="244"/>
    </location>
</feature>
<feature type="binding site" evidence="1">
    <location>
        <begin position="35"/>
        <end position="42"/>
    </location>
    <ligand>
        <name>ATP</name>
        <dbReference type="ChEBI" id="CHEBI:30616"/>
    </ligand>
</feature>
<gene>
    <name evidence="1" type="primary">hmuV</name>
    <name type="synonym">bhuV</name>
    <name type="ordered locus">BB4659</name>
</gene>
<keyword id="KW-0067">ATP-binding</keyword>
<keyword id="KW-0997">Cell inner membrane</keyword>
<keyword id="KW-1003">Cell membrane</keyword>
<keyword id="KW-0472">Membrane</keyword>
<keyword id="KW-0547">Nucleotide-binding</keyword>
<keyword id="KW-1278">Translocase</keyword>
<keyword id="KW-0813">Transport</keyword>
<proteinExistence type="inferred from homology"/>
<accession>Q7WEH6</accession>
<protein>
    <recommendedName>
        <fullName evidence="1">Hemin import ATP-binding protein HmuV</fullName>
        <ecNumber evidence="1">7.6.2.-</ecNumber>
    </recommendedName>
</protein>
<dbReference type="EC" id="7.6.2.-" evidence="1"/>
<dbReference type="EMBL" id="BX640451">
    <property type="protein sequence ID" value="CAE35021.1"/>
    <property type="molecule type" value="Genomic_DNA"/>
</dbReference>
<dbReference type="RefSeq" id="WP_010927158.1">
    <property type="nucleotide sequence ID" value="NC_002927.3"/>
</dbReference>
<dbReference type="SMR" id="Q7WEH6"/>
<dbReference type="KEGG" id="bbr:BB4659"/>
<dbReference type="eggNOG" id="COG1120">
    <property type="taxonomic scope" value="Bacteria"/>
</dbReference>
<dbReference type="HOGENOM" id="CLU_000604_1_11_4"/>
<dbReference type="Proteomes" id="UP000001027">
    <property type="component" value="Chromosome"/>
</dbReference>
<dbReference type="GO" id="GO:0005886">
    <property type="term" value="C:plasma membrane"/>
    <property type="evidence" value="ECO:0007669"/>
    <property type="project" value="UniProtKB-SubCell"/>
</dbReference>
<dbReference type="GO" id="GO:0005524">
    <property type="term" value="F:ATP binding"/>
    <property type="evidence" value="ECO:0007669"/>
    <property type="project" value="UniProtKB-KW"/>
</dbReference>
<dbReference type="GO" id="GO:0016887">
    <property type="term" value="F:ATP hydrolysis activity"/>
    <property type="evidence" value="ECO:0007669"/>
    <property type="project" value="InterPro"/>
</dbReference>
<dbReference type="CDD" id="cd03214">
    <property type="entry name" value="ABC_Iron-Siderophores_B12_Hemin"/>
    <property type="match status" value="1"/>
</dbReference>
<dbReference type="Gene3D" id="3.40.50.300">
    <property type="entry name" value="P-loop containing nucleotide triphosphate hydrolases"/>
    <property type="match status" value="1"/>
</dbReference>
<dbReference type="InterPro" id="IPR003593">
    <property type="entry name" value="AAA+_ATPase"/>
</dbReference>
<dbReference type="InterPro" id="IPR003439">
    <property type="entry name" value="ABC_transporter-like_ATP-bd"/>
</dbReference>
<dbReference type="InterPro" id="IPR017871">
    <property type="entry name" value="ABC_transporter-like_CS"/>
</dbReference>
<dbReference type="InterPro" id="IPR027417">
    <property type="entry name" value="P-loop_NTPase"/>
</dbReference>
<dbReference type="NCBIfam" id="NF010068">
    <property type="entry name" value="PRK13548.1"/>
    <property type="match status" value="1"/>
</dbReference>
<dbReference type="PANTHER" id="PTHR42794">
    <property type="entry name" value="HEMIN IMPORT ATP-BINDING PROTEIN HMUV"/>
    <property type="match status" value="1"/>
</dbReference>
<dbReference type="PANTHER" id="PTHR42794:SF1">
    <property type="entry name" value="HEMIN IMPORT ATP-BINDING PROTEIN HMUV"/>
    <property type="match status" value="1"/>
</dbReference>
<dbReference type="Pfam" id="PF00005">
    <property type="entry name" value="ABC_tran"/>
    <property type="match status" value="1"/>
</dbReference>
<dbReference type="SMART" id="SM00382">
    <property type="entry name" value="AAA"/>
    <property type="match status" value="1"/>
</dbReference>
<dbReference type="SUPFAM" id="SSF52540">
    <property type="entry name" value="P-loop containing nucleoside triphosphate hydrolases"/>
    <property type="match status" value="1"/>
</dbReference>
<dbReference type="PROSITE" id="PS00211">
    <property type="entry name" value="ABC_TRANSPORTER_1"/>
    <property type="match status" value="1"/>
</dbReference>
<dbReference type="PROSITE" id="PS50893">
    <property type="entry name" value="ABC_TRANSPORTER_2"/>
    <property type="match status" value="1"/>
</dbReference>
<dbReference type="PROSITE" id="PS51261">
    <property type="entry name" value="HMUV"/>
    <property type="match status" value="1"/>
</dbReference>
<organism>
    <name type="scientific">Bordetella bronchiseptica (strain ATCC BAA-588 / NCTC 13252 / RB50)</name>
    <name type="common">Alcaligenes bronchisepticus</name>
    <dbReference type="NCBI Taxonomy" id="257310"/>
    <lineage>
        <taxon>Bacteria</taxon>
        <taxon>Pseudomonadati</taxon>
        <taxon>Pseudomonadota</taxon>
        <taxon>Betaproteobacteria</taxon>
        <taxon>Burkholderiales</taxon>
        <taxon>Alcaligenaceae</taxon>
        <taxon>Bordetella</taxon>
    </lineage>
</organism>
<evidence type="ECO:0000255" key="1">
    <source>
        <dbReference type="HAMAP-Rule" id="MF_01718"/>
    </source>
</evidence>
<comment type="function">
    <text evidence="1">Part of the ABC transporter complex HmuTUV involved in hemin import. Responsible for energy coupling to the transport system.</text>
</comment>
<comment type="subunit">
    <text evidence="1">The complex is composed of two ATP-binding proteins (HmuV), two transmembrane proteins (HmuU) and a solute-binding protein (HmuT).</text>
</comment>
<comment type="subcellular location">
    <subcellularLocation>
        <location evidence="1">Cell inner membrane</location>
        <topology evidence="1">Peripheral membrane protein</topology>
    </subcellularLocation>
</comment>
<comment type="similarity">
    <text evidence="1">Belongs to the ABC transporter superfamily. Heme (hemin) importer (TC 3.A.1.14.5) family.</text>
</comment>
<name>HMUV_BORBR</name>